<evidence type="ECO:0000255" key="1">
    <source>
        <dbReference type="HAMAP-Rule" id="MF_00379"/>
    </source>
</evidence>
<organism>
    <name type="scientific">Moorella thermoacetica (strain ATCC 39073 / JCM 9320)</name>
    <dbReference type="NCBI Taxonomy" id="264732"/>
    <lineage>
        <taxon>Bacteria</taxon>
        <taxon>Bacillati</taxon>
        <taxon>Bacillota</taxon>
        <taxon>Clostridia</taxon>
        <taxon>Moorellales</taxon>
        <taxon>Moorellaceae</taxon>
        <taxon>Moorella</taxon>
    </lineage>
</organism>
<dbReference type="EC" id="3.6.-.-" evidence="1"/>
<dbReference type="EMBL" id="CP000232">
    <property type="protein sequence ID" value="ABC20801.1"/>
    <property type="molecule type" value="Genomic_DNA"/>
</dbReference>
<dbReference type="RefSeq" id="YP_431344.1">
    <property type="nucleotide sequence ID" value="NC_007644.1"/>
</dbReference>
<dbReference type="SMR" id="Q2RFI8"/>
<dbReference type="STRING" id="264732.Moth_2519"/>
<dbReference type="EnsemblBacteria" id="ABC20801">
    <property type="protein sequence ID" value="ABC20801"/>
    <property type="gene ID" value="Moth_2519"/>
</dbReference>
<dbReference type="KEGG" id="mta:Moth_2519"/>
<dbReference type="PATRIC" id="fig|264732.11.peg.2742"/>
<dbReference type="eggNOG" id="COG0486">
    <property type="taxonomic scope" value="Bacteria"/>
</dbReference>
<dbReference type="HOGENOM" id="CLU_019624_4_1_9"/>
<dbReference type="OrthoDB" id="9805918at2"/>
<dbReference type="GO" id="GO:0005829">
    <property type="term" value="C:cytosol"/>
    <property type="evidence" value="ECO:0007669"/>
    <property type="project" value="TreeGrafter"/>
</dbReference>
<dbReference type="GO" id="GO:0005525">
    <property type="term" value="F:GTP binding"/>
    <property type="evidence" value="ECO:0007669"/>
    <property type="project" value="UniProtKB-UniRule"/>
</dbReference>
<dbReference type="GO" id="GO:0003924">
    <property type="term" value="F:GTPase activity"/>
    <property type="evidence" value="ECO:0007669"/>
    <property type="project" value="UniProtKB-UniRule"/>
</dbReference>
<dbReference type="GO" id="GO:0046872">
    <property type="term" value="F:metal ion binding"/>
    <property type="evidence" value="ECO:0007669"/>
    <property type="project" value="UniProtKB-KW"/>
</dbReference>
<dbReference type="GO" id="GO:0030488">
    <property type="term" value="P:tRNA methylation"/>
    <property type="evidence" value="ECO:0007669"/>
    <property type="project" value="TreeGrafter"/>
</dbReference>
<dbReference type="GO" id="GO:0002098">
    <property type="term" value="P:tRNA wobble uridine modification"/>
    <property type="evidence" value="ECO:0007669"/>
    <property type="project" value="TreeGrafter"/>
</dbReference>
<dbReference type="CDD" id="cd04164">
    <property type="entry name" value="trmE"/>
    <property type="match status" value="1"/>
</dbReference>
<dbReference type="CDD" id="cd14858">
    <property type="entry name" value="TrmE_N"/>
    <property type="match status" value="1"/>
</dbReference>
<dbReference type="FunFam" id="3.30.1360.120:FF:000003">
    <property type="entry name" value="tRNA modification GTPase MnmE"/>
    <property type="match status" value="1"/>
</dbReference>
<dbReference type="FunFam" id="3.40.50.300:FF:000494">
    <property type="entry name" value="tRNA modification GTPase MnmE"/>
    <property type="match status" value="1"/>
</dbReference>
<dbReference type="Gene3D" id="3.40.50.300">
    <property type="entry name" value="P-loop containing nucleotide triphosphate hydrolases"/>
    <property type="match status" value="1"/>
</dbReference>
<dbReference type="Gene3D" id="3.30.1360.120">
    <property type="entry name" value="Probable tRNA modification gtpase trme, domain 1"/>
    <property type="match status" value="1"/>
</dbReference>
<dbReference type="Gene3D" id="1.20.120.430">
    <property type="entry name" value="tRNA modification GTPase MnmE domain 2"/>
    <property type="match status" value="1"/>
</dbReference>
<dbReference type="HAMAP" id="MF_00379">
    <property type="entry name" value="GTPase_MnmE"/>
    <property type="match status" value="1"/>
</dbReference>
<dbReference type="InterPro" id="IPR031168">
    <property type="entry name" value="G_TrmE"/>
</dbReference>
<dbReference type="InterPro" id="IPR006073">
    <property type="entry name" value="GTP-bd"/>
</dbReference>
<dbReference type="InterPro" id="IPR018948">
    <property type="entry name" value="GTP-bd_TrmE_N"/>
</dbReference>
<dbReference type="InterPro" id="IPR004520">
    <property type="entry name" value="GTPase_MnmE"/>
</dbReference>
<dbReference type="InterPro" id="IPR027368">
    <property type="entry name" value="MnmE_dom2"/>
</dbReference>
<dbReference type="InterPro" id="IPR025867">
    <property type="entry name" value="MnmE_helical"/>
</dbReference>
<dbReference type="InterPro" id="IPR027417">
    <property type="entry name" value="P-loop_NTPase"/>
</dbReference>
<dbReference type="InterPro" id="IPR005225">
    <property type="entry name" value="Small_GTP-bd"/>
</dbReference>
<dbReference type="InterPro" id="IPR027266">
    <property type="entry name" value="TrmE/GcvT_dom1"/>
</dbReference>
<dbReference type="NCBIfam" id="TIGR00450">
    <property type="entry name" value="mnmE_trmE_thdF"/>
    <property type="match status" value="1"/>
</dbReference>
<dbReference type="NCBIfam" id="NF003661">
    <property type="entry name" value="PRK05291.1-3"/>
    <property type="match status" value="1"/>
</dbReference>
<dbReference type="NCBIfam" id="TIGR00231">
    <property type="entry name" value="small_GTP"/>
    <property type="match status" value="1"/>
</dbReference>
<dbReference type="PANTHER" id="PTHR42714">
    <property type="entry name" value="TRNA MODIFICATION GTPASE GTPBP3"/>
    <property type="match status" value="1"/>
</dbReference>
<dbReference type="PANTHER" id="PTHR42714:SF2">
    <property type="entry name" value="TRNA MODIFICATION GTPASE GTPBP3, MITOCHONDRIAL"/>
    <property type="match status" value="1"/>
</dbReference>
<dbReference type="Pfam" id="PF01926">
    <property type="entry name" value="MMR_HSR1"/>
    <property type="match status" value="1"/>
</dbReference>
<dbReference type="Pfam" id="PF12631">
    <property type="entry name" value="MnmE_helical"/>
    <property type="match status" value="1"/>
</dbReference>
<dbReference type="Pfam" id="PF10396">
    <property type="entry name" value="TrmE_N"/>
    <property type="match status" value="1"/>
</dbReference>
<dbReference type="PRINTS" id="PR00326">
    <property type="entry name" value="GTP1OBG"/>
</dbReference>
<dbReference type="SUPFAM" id="SSF52540">
    <property type="entry name" value="P-loop containing nucleoside triphosphate hydrolases"/>
    <property type="match status" value="1"/>
</dbReference>
<dbReference type="PROSITE" id="PS51709">
    <property type="entry name" value="G_TRME"/>
    <property type="match status" value="1"/>
</dbReference>
<sequence>MLDDTIAALATPPGEGGISIIRLSGSQAIAIVAKVFKPVKGPDLTTTRSHTLRLGFIIDPVSGESLDEVLVSVMRAPHSYTAEDVVEINCHGGALATSRVLQLVLRTGARLAEPGEFTRRAFLNGRLDLAQAEAVLEIIRARSSRGLTAALDHLRGNLSRKIGELNERLTGILAALEASMDFPEEVGEVDPENLADLRRILAGVDRLLATWEEGRLLTEGLKVAIVGRPNVGKSSLLNALLNQERAIVSNIPGTTRDTIEETLQLGGFTCRLIDTAGLRETADELESIGVARSKKAIAAADLVLVVVDLQTGIQDEDRRVLESVRDKVLIIIGNKLDLVAHDINKKLADLESFAGNYPRVAVSALKGKGLDELARKVQEIVLGGRALAGSDEPLITNARHRAALENCREHLASAIKAWEEGLPEDLIAIDLWSAADYLGEIIGTTAREDLLDRIFSDFCIGK</sequence>
<name>MNME_MOOTA</name>
<comment type="function">
    <text evidence="1">Exhibits a very high intrinsic GTPase hydrolysis rate. Involved in the addition of a carboxymethylaminomethyl (cmnm) group at the wobble position (U34) of certain tRNAs, forming tRNA-cmnm(5)s(2)U34.</text>
</comment>
<comment type="cofactor">
    <cofactor evidence="1">
        <name>K(+)</name>
        <dbReference type="ChEBI" id="CHEBI:29103"/>
    </cofactor>
    <text evidence="1">Binds 1 potassium ion per subunit.</text>
</comment>
<comment type="subunit">
    <text evidence="1">Homodimer. Heterotetramer of two MnmE and two MnmG subunits.</text>
</comment>
<comment type="subcellular location">
    <subcellularLocation>
        <location evidence="1">Cytoplasm</location>
    </subcellularLocation>
</comment>
<comment type="similarity">
    <text evidence="1">Belongs to the TRAFAC class TrmE-Era-EngA-EngB-Septin-like GTPase superfamily. TrmE GTPase family.</text>
</comment>
<gene>
    <name evidence="1" type="primary">mnmE</name>
    <name evidence="1" type="synonym">trmE</name>
    <name type="ordered locus">Moth_2519</name>
</gene>
<keyword id="KW-0963">Cytoplasm</keyword>
<keyword id="KW-0342">GTP-binding</keyword>
<keyword id="KW-0378">Hydrolase</keyword>
<keyword id="KW-0460">Magnesium</keyword>
<keyword id="KW-0479">Metal-binding</keyword>
<keyword id="KW-0547">Nucleotide-binding</keyword>
<keyword id="KW-0630">Potassium</keyword>
<keyword id="KW-0819">tRNA processing</keyword>
<protein>
    <recommendedName>
        <fullName evidence="1">tRNA modification GTPase MnmE</fullName>
        <ecNumber evidence="1">3.6.-.-</ecNumber>
    </recommendedName>
</protein>
<proteinExistence type="inferred from homology"/>
<accession>Q2RFI8</accession>
<reference key="1">
    <citation type="journal article" date="2008" name="Environ. Microbiol.">
        <title>The complete genome sequence of Moorella thermoacetica (f. Clostridium thermoaceticum).</title>
        <authorList>
            <person name="Pierce E."/>
            <person name="Xie G."/>
            <person name="Barabote R.D."/>
            <person name="Saunders E."/>
            <person name="Han C.S."/>
            <person name="Detter J.C."/>
            <person name="Richardson P."/>
            <person name="Brettin T.S."/>
            <person name="Das A."/>
            <person name="Ljungdahl L.G."/>
            <person name="Ragsdale S.W."/>
        </authorList>
    </citation>
    <scope>NUCLEOTIDE SEQUENCE [LARGE SCALE GENOMIC DNA]</scope>
    <source>
        <strain>ATCC 39073 / JCM 9320</strain>
    </source>
</reference>
<feature type="chain" id="PRO_1000072166" description="tRNA modification GTPase MnmE">
    <location>
        <begin position="1"/>
        <end position="462"/>
    </location>
</feature>
<feature type="domain" description="TrmE-type G">
    <location>
        <begin position="220"/>
        <end position="382"/>
    </location>
</feature>
<feature type="binding site" evidence="1">
    <location>
        <position position="22"/>
    </location>
    <ligand>
        <name>(6S)-5-formyl-5,6,7,8-tetrahydrofolate</name>
        <dbReference type="ChEBI" id="CHEBI:57457"/>
    </ligand>
</feature>
<feature type="binding site" evidence="1">
    <location>
        <position position="87"/>
    </location>
    <ligand>
        <name>(6S)-5-formyl-5,6,7,8-tetrahydrofolate</name>
        <dbReference type="ChEBI" id="CHEBI:57457"/>
    </ligand>
</feature>
<feature type="binding site" evidence="1">
    <location>
        <position position="126"/>
    </location>
    <ligand>
        <name>(6S)-5-formyl-5,6,7,8-tetrahydrofolate</name>
        <dbReference type="ChEBI" id="CHEBI:57457"/>
    </ligand>
</feature>
<feature type="binding site" evidence="1">
    <location>
        <begin position="230"/>
        <end position="235"/>
    </location>
    <ligand>
        <name>GTP</name>
        <dbReference type="ChEBI" id="CHEBI:37565"/>
    </ligand>
</feature>
<feature type="binding site" evidence="1">
    <location>
        <position position="230"/>
    </location>
    <ligand>
        <name>K(+)</name>
        <dbReference type="ChEBI" id="CHEBI:29103"/>
    </ligand>
</feature>
<feature type="binding site" evidence="1">
    <location>
        <position position="234"/>
    </location>
    <ligand>
        <name>Mg(2+)</name>
        <dbReference type="ChEBI" id="CHEBI:18420"/>
    </ligand>
</feature>
<feature type="binding site" evidence="1">
    <location>
        <begin position="249"/>
        <end position="255"/>
    </location>
    <ligand>
        <name>GTP</name>
        <dbReference type="ChEBI" id="CHEBI:37565"/>
    </ligand>
</feature>
<feature type="binding site" evidence="1">
    <location>
        <position position="249"/>
    </location>
    <ligand>
        <name>K(+)</name>
        <dbReference type="ChEBI" id="CHEBI:29103"/>
    </ligand>
</feature>
<feature type="binding site" evidence="1">
    <location>
        <position position="251"/>
    </location>
    <ligand>
        <name>K(+)</name>
        <dbReference type="ChEBI" id="CHEBI:29103"/>
    </ligand>
</feature>
<feature type="binding site" evidence="1">
    <location>
        <position position="254"/>
    </location>
    <ligand>
        <name>K(+)</name>
        <dbReference type="ChEBI" id="CHEBI:29103"/>
    </ligand>
</feature>
<feature type="binding site" evidence="1">
    <location>
        <position position="255"/>
    </location>
    <ligand>
        <name>Mg(2+)</name>
        <dbReference type="ChEBI" id="CHEBI:18420"/>
    </ligand>
</feature>
<feature type="binding site" evidence="1">
    <location>
        <begin position="274"/>
        <end position="277"/>
    </location>
    <ligand>
        <name>GTP</name>
        <dbReference type="ChEBI" id="CHEBI:37565"/>
    </ligand>
</feature>
<feature type="binding site" evidence="1">
    <location>
        <position position="462"/>
    </location>
    <ligand>
        <name>(6S)-5-formyl-5,6,7,8-tetrahydrofolate</name>
        <dbReference type="ChEBI" id="CHEBI:57457"/>
    </ligand>
</feature>